<evidence type="ECO:0000255" key="1">
    <source>
        <dbReference type="HAMAP-Rule" id="MF_00503"/>
    </source>
</evidence>
<evidence type="ECO:0000305" key="2"/>
<organism>
    <name type="scientific">Xanthomonas campestris pv. campestris (strain B100)</name>
    <dbReference type="NCBI Taxonomy" id="509169"/>
    <lineage>
        <taxon>Bacteria</taxon>
        <taxon>Pseudomonadati</taxon>
        <taxon>Pseudomonadota</taxon>
        <taxon>Gammaproteobacteria</taxon>
        <taxon>Lysobacterales</taxon>
        <taxon>Lysobacteraceae</taxon>
        <taxon>Xanthomonas</taxon>
    </lineage>
</organism>
<feature type="chain" id="PRO_1000126994" description="Large ribosomal subunit protein bL9">
    <location>
        <begin position="1"/>
        <end position="149"/>
    </location>
</feature>
<proteinExistence type="inferred from homology"/>
<accession>B0RUY7</accession>
<reference key="1">
    <citation type="journal article" date="2008" name="J. Biotechnol.">
        <title>The genome of Xanthomonas campestris pv. campestris B100 and its use for the reconstruction of metabolic pathways involved in xanthan biosynthesis.</title>
        <authorList>
            <person name="Vorhoelter F.-J."/>
            <person name="Schneiker S."/>
            <person name="Goesmann A."/>
            <person name="Krause L."/>
            <person name="Bekel T."/>
            <person name="Kaiser O."/>
            <person name="Linke B."/>
            <person name="Patschkowski T."/>
            <person name="Rueckert C."/>
            <person name="Schmid J."/>
            <person name="Sidhu V.K."/>
            <person name="Sieber V."/>
            <person name="Tauch A."/>
            <person name="Watt S.A."/>
            <person name="Weisshaar B."/>
            <person name="Becker A."/>
            <person name="Niehaus K."/>
            <person name="Puehler A."/>
        </authorList>
    </citation>
    <scope>NUCLEOTIDE SEQUENCE [LARGE SCALE GENOMIC DNA]</scope>
    <source>
        <strain>B100</strain>
    </source>
</reference>
<dbReference type="EMBL" id="AM920689">
    <property type="protein sequence ID" value="CAP52056.1"/>
    <property type="molecule type" value="Genomic_DNA"/>
</dbReference>
<dbReference type="SMR" id="B0RUY7"/>
<dbReference type="KEGG" id="xca:xcc-b100_2695"/>
<dbReference type="HOGENOM" id="CLU_078938_4_1_6"/>
<dbReference type="Proteomes" id="UP000001188">
    <property type="component" value="Chromosome"/>
</dbReference>
<dbReference type="GO" id="GO:1990904">
    <property type="term" value="C:ribonucleoprotein complex"/>
    <property type="evidence" value="ECO:0007669"/>
    <property type="project" value="UniProtKB-KW"/>
</dbReference>
<dbReference type="GO" id="GO:0005840">
    <property type="term" value="C:ribosome"/>
    <property type="evidence" value="ECO:0007669"/>
    <property type="project" value="UniProtKB-KW"/>
</dbReference>
<dbReference type="GO" id="GO:0019843">
    <property type="term" value="F:rRNA binding"/>
    <property type="evidence" value="ECO:0007669"/>
    <property type="project" value="UniProtKB-UniRule"/>
</dbReference>
<dbReference type="GO" id="GO:0003735">
    <property type="term" value="F:structural constituent of ribosome"/>
    <property type="evidence" value="ECO:0007669"/>
    <property type="project" value="InterPro"/>
</dbReference>
<dbReference type="GO" id="GO:0006412">
    <property type="term" value="P:translation"/>
    <property type="evidence" value="ECO:0007669"/>
    <property type="project" value="UniProtKB-UniRule"/>
</dbReference>
<dbReference type="FunFam" id="3.10.430.100:FF:000007">
    <property type="entry name" value="50S ribosomal protein L9"/>
    <property type="match status" value="1"/>
</dbReference>
<dbReference type="FunFam" id="3.40.5.10:FF:000001">
    <property type="entry name" value="50S ribosomal protein L9"/>
    <property type="match status" value="1"/>
</dbReference>
<dbReference type="Gene3D" id="3.10.430.100">
    <property type="entry name" value="Ribosomal protein L9, C-terminal domain"/>
    <property type="match status" value="1"/>
</dbReference>
<dbReference type="Gene3D" id="3.40.5.10">
    <property type="entry name" value="Ribosomal protein L9, N-terminal domain"/>
    <property type="match status" value="1"/>
</dbReference>
<dbReference type="HAMAP" id="MF_00503">
    <property type="entry name" value="Ribosomal_bL9"/>
    <property type="match status" value="1"/>
</dbReference>
<dbReference type="InterPro" id="IPR000244">
    <property type="entry name" value="Ribosomal_bL9"/>
</dbReference>
<dbReference type="InterPro" id="IPR009027">
    <property type="entry name" value="Ribosomal_bL9/RNase_H1_N"/>
</dbReference>
<dbReference type="InterPro" id="IPR020594">
    <property type="entry name" value="Ribosomal_bL9_bac/chp"/>
</dbReference>
<dbReference type="InterPro" id="IPR020069">
    <property type="entry name" value="Ribosomal_bL9_C"/>
</dbReference>
<dbReference type="InterPro" id="IPR036791">
    <property type="entry name" value="Ribosomal_bL9_C_sf"/>
</dbReference>
<dbReference type="InterPro" id="IPR020070">
    <property type="entry name" value="Ribosomal_bL9_N"/>
</dbReference>
<dbReference type="InterPro" id="IPR036935">
    <property type="entry name" value="Ribosomal_bL9_N_sf"/>
</dbReference>
<dbReference type="NCBIfam" id="TIGR00158">
    <property type="entry name" value="L9"/>
    <property type="match status" value="1"/>
</dbReference>
<dbReference type="PANTHER" id="PTHR21368">
    <property type="entry name" value="50S RIBOSOMAL PROTEIN L9"/>
    <property type="match status" value="1"/>
</dbReference>
<dbReference type="Pfam" id="PF03948">
    <property type="entry name" value="Ribosomal_L9_C"/>
    <property type="match status" value="1"/>
</dbReference>
<dbReference type="Pfam" id="PF01281">
    <property type="entry name" value="Ribosomal_L9_N"/>
    <property type="match status" value="1"/>
</dbReference>
<dbReference type="SUPFAM" id="SSF55658">
    <property type="entry name" value="L9 N-domain-like"/>
    <property type="match status" value="1"/>
</dbReference>
<dbReference type="SUPFAM" id="SSF55653">
    <property type="entry name" value="Ribosomal protein L9 C-domain"/>
    <property type="match status" value="1"/>
</dbReference>
<dbReference type="PROSITE" id="PS00651">
    <property type="entry name" value="RIBOSOMAL_L9"/>
    <property type="match status" value="1"/>
</dbReference>
<comment type="function">
    <text evidence="1">Binds to the 23S rRNA.</text>
</comment>
<comment type="similarity">
    <text evidence="1">Belongs to the bacterial ribosomal protein bL9 family.</text>
</comment>
<sequence length="149" mass="15699">MDLILLQKVTNLGNLGDKVSVKPGYGRNFLVPQGKAVPATAANVEAFETKRAEYEAKANTILADAQSRATKFEGASVTIGAHASTEGKLYGSVGPRDIAEAFTAAGLPLEKSEVILGEGAFRNVGEYDVVLHLHADVETTVKVIVESDA</sequence>
<name>RL9_XANCB</name>
<protein>
    <recommendedName>
        <fullName evidence="1">Large ribosomal subunit protein bL9</fullName>
    </recommendedName>
    <alternativeName>
        <fullName evidence="2">50S ribosomal protein L9</fullName>
    </alternativeName>
</protein>
<gene>
    <name evidence="1" type="primary">rplI</name>
    <name type="ordered locus">xcc-b100_2695</name>
</gene>
<keyword id="KW-0687">Ribonucleoprotein</keyword>
<keyword id="KW-0689">Ribosomal protein</keyword>
<keyword id="KW-0694">RNA-binding</keyword>
<keyword id="KW-0699">rRNA-binding</keyword>